<evidence type="ECO:0000255" key="1">
    <source>
        <dbReference type="HAMAP-Rule" id="MF_03112"/>
    </source>
</evidence>
<reference key="1">
    <citation type="submission" date="2007-12" db="EMBL/GenBank/DDBJ databases">
        <title>Annotation of Entamoeba dispar SAW760.</title>
        <authorList>
            <person name="Lorenzi H."/>
            <person name="Inman J."/>
            <person name="Schobel S."/>
            <person name="Amedeo P."/>
            <person name="Caler E."/>
        </authorList>
    </citation>
    <scope>NUCLEOTIDE SEQUENCE [LARGE SCALE GENOMIC DNA]</scope>
    <source>
        <strain>ATCC PRA-260 / SAW760</strain>
    </source>
</reference>
<gene>
    <name type="ORF">EDI_044870</name>
</gene>
<sequence>MSLSPPNNLEHIITSQTLKWVFVGGKGGVGKTTTSCSLGVLIANRNPQKKVLIISTDPAHNTSDAFDIKFGAEPKAVPGVPNLSVMEVDVKDAMKGMFDGVEQGTNQNGEFGLLSEITGMVGMFKSVPGIDEAIAFSKIINQAQQMNYDLVLFDTAPTGHTLRFLSLPSVLRDMLEKVIKLQELFGPMMSQFGGIIGTNINFNELKPKMEDMLKTSEQIVKDFTNPNLTTFIPVLIPEFLPLYETERLIQELMNLNMDVNSIIVNQILPVNDCCDYCKNKRSVQAKYLGQIDVLYSDFHLIKINMQTNEVRGVPALCAFSKNFEAKH</sequence>
<keyword id="KW-0067">ATP-binding</keyword>
<keyword id="KW-0963">Cytoplasm</keyword>
<keyword id="KW-0256">Endoplasmic reticulum</keyword>
<keyword id="KW-0378">Hydrolase</keyword>
<keyword id="KW-0479">Metal-binding</keyword>
<keyword id="KW-0547">Nucleotide-binding</keyword>
<keyword id="KW-0813">Transport</keyword>
<keyword id="KW-0862">Zinc</keyword>
<accession>B0EHY7</accession>
<organism>
    <name type="scientific">Entamoeba dispar (strain ATCC PRA-260 / SAW760)</name>
    <dbReference type="NCBI Taxonomy" id="370354"/>
    <lineage>
        <taxon>Eukaryota</taxon>
        <taxon>Amoebozoa</taxon>
        <taxon>Evosea</taxon>
        <taxon>Archamoebae</taxon>
        <taxon>Mastigamoebida</taxon>
        <taxon>Entamoebidae</taxon>
        <taxon>Entamoeba</taxon>
    </lineage>
</organism>
<feature type="chain" id="PRO_0000388163" description="ATPase ASNA1 homolog">
    <location>
        <begin position="1"/>
        <end position="327"/>
    </location>
</feature>
<feature type="active site" evidence="1">
    <location>
        <position position="57"/>
    </location>
</feature>
<feature type="binding site" evidence="1">
    <location>
        <begin position="26"/>
        <end position="33"/>
    </location>
    <ligand>
        <name>ATP</name>
        <dbReference type="ChEBI" id="CHEBI:30616"/>
    </ligand>
</feature>
<feature type="binding site" evidence="1">
    <location>
        <position position="238"/>
    </location>
    <ligand>
        <name>ATP</name>
        <dbReference type="ChEBI" id="CHEBI:30616"/>
    </ligand>
</feature>
<feature type="binding site" evidence="1">
    <location>
        <position position="265"/>
    </location>
    <ligand>
        <name>ATP</name>
        <dbReference type="ChEBI" id="CHEBI:30616"/>
    </ligand>
</feature>
<feature type="binding site" evidence="1">
    <location>
        <position position="274"/>
    </location>
    <ligand>
        <name>Zn(2+)</name>
        <dbReference type="ChEBI" id="CHEBI:29105"/>
        <note>ligand shared between dimeric partners</note>
    </ligand>
</feature>
<feature type="binding site" evidence="1">
    <location>
        <position position="277"/>
    </location>
    <ligand>
        <name>Zn(2+)</name>
        <dbReference type="ChEBI" id="CHEBI:29105"/>
        <note>ligand shared between dimeric partners</note>
    </ligand>
</feature>
<dbReference type="EC" id="3.6.-.-" evidence="1"/>
<dbReference type="EMBL" id="DS549356">
    <property type="protein sequence ID" value="EDR25931.1"/>
    <property type="molecule type" value="Genomic_DNA"/>
</dbReference>
<dbReference type="RefSeq" id="XP_001737840.1">
    <property type="nucleotide sequence ID" value="XM_001737788.1"/>
</dbReference>
<dbReference type="SMR" id="B0EHY7"/>
<dbReference type="EnsemblProtists" id="EDR25931">
    <property type="protein sequence ID" value="EDR25931"/>
    <property type="gene ID" value="EDI_044870"/>
</dbReference>
<dbReference type="GeneID" id="5882894"/>
<dbReference type="KEGG" id="edi:EDI_044870"/>
<dbReference type="VEuPathDB" id="AmoebaDB:EDI_044870"/>
<dbReference type="eggNOG" id="KOG2825">
    <property type="taxonomic scope" value="Eukaryota"/>
</dbReference>
<dbReference type="OMA" id="MDAPYEF"/>
<dbReference type="OrthoDB" id="1770at2759"/>
<dbReference type="Proteomes" id="UP000008076">
    <property type="component" value="Unassembled WGS sequence"/>
</dbReference>
<dbReference type="GO" id="GO:0043529">
    <property type="term" value="C:GET complex"/>
    <property type="evidence" value="ECO:0007669"/>
    <property type="project" value="TreeGrafter"/>
</dbReference>
<dbReference type="GO" id="GO:0005524">
    <property type="term" value="F:ATP binding"/>
    <property type="evidence" value="ECO:0007669"/>
    <property type="project" value="UniProtKB-UniRule"/>
</dbReference>
<dbReference type="GO" id="GO:0016887">
    <property type="term" value="F:ATP hydrolysis activity"/>
    <property type="evidence" value="ECO:0007669"/>
    <property type="project" value="InterPro"/>
</dbReference>
<dbReference type="GO" id="GO:0046872">
    <property type="term" value="F:metal ion binding"/>
    <property type="evidence" value="ECO:0007669"/>
    <property type="project" value="UniProtKB-KW"/>
</dbReference>
<dbReference type="GO" id="GO:0071816">
    <property type="term" value="P:tail-anchored membrane protein insertion into ER membrane"/>
    <property type="evidence" value="ECO:0007669"/>
    <property type="project" value="TreeGrafter"/>
</dbReference>
<dbReference type="CDD" id="cd02035">
    <property type="entry name" value="ArsA"/>
    <property type="match status" value="1"/>
</dbReference>
<dbReference type="FunFam" id="3.40.50.300:FF:003568">
    <property type="entry name" value="ATPase ASNA1 homolog"/>
    <property type="match status" value="1"/>
</dbReference>
<dbReference type="Gene3D" id="3.40.50.300">
    <property type="entry name" value="P-loop containing nucleotide triphosphate hydrolases"/>
    <property type="match status" value="1"/>
</dbReference>
<dbReference type="HAMAP" id="MF_03112">
    <property type="entry name" value="Asna1_Get3"/>
    <property type="match status" value="1"/>
</dbReference>
<dbReference type="InterPro" id="IPR025723">
    <property type="entry name" value="Anion-transp_ATPase-like_dom"/>
</dbReference>
<dbReference type="InterPro" id="IPR016300">
    <property type="entry name" value="ATPase_ArsA/GET3"/>
</dbReference>
<dbReference type="InterPro" id="IPR027542">
    <property type="entry name" value="ATPase_ArsA/GET3_euk"/>
</dbReference>
<dbReference type="InterPro" id="IPR027417">
    <property type="entry name" value="P-loop_NTPase"/>
</dbReference>
<dbReference type="NCBIfam" id="TIGR00345">
    <property type="entry name" value="GET3_arsA_TRC40"/>
    <property type="match status" value="1"/>
</dbReference>
<dbReference type="PANTHER" id="PTHR10803">
    <property type="entry name" value="ARSENICAL PUMP-DRIVING ATPASE ARSENITE-TRANSLOCATING ATPASE"/>
    <property type="match status" value="1"/>
</dbReference>
<dbReference type="PANTHER" id="PTHR10803:SF3">
    <property type="entry name" value="ATPASE GET3"/>
    <property type="match status" value="1"/>
</dbReference>
<dbReference type="Pfam" id="PF02374">
    <property type="entry name" value="ArsA_ATPase"/>
    <property type="match status" value="1"/>
</dbReference>
<dbReference type="SUPFAM" id="SSF52540">
    <property type="entry name" value="P-loop containing nucleoside triphosphate hydrolases"/>
    <property type="match status" value="1"/>
</dbReference>
<protein>
    <recommendedName>
        <fullName evidence="1">ATPase ASNA1 homolog</fullName>
        <ecNumber evidence="1">3.6.-.-</ecNumber>
    </recommendedName>
    <alternativeName>
        <fullName evidence="1">Arsenical pump-driving ATPase homolog</fullName>
    </alternativeName>
    <alternativeName>
        <fullName evidence="1">Arsenite-stimulated ATPase</fullName>
    </alternativeName>
</protein>
<proteinExistence type="inferred from homology"/>
<name>ASNA_ENTDS</name>
<comment type="function">
    <text evidence="1">ATPase required for the post-translational delivery of tail-anchored (TA) proteins to the endoplasmic reticulum. Recognizes and selectively binds the transmembrane domain of TA proteins in the cytosol. This complex then targets to the endoplasmic reticulum by membrane-bound receptors, where the tail-anchored protein is released for insertion. This process is regulated by ATP binding and hydrolysis. ATP binding drives the homodimer towards the closed dimer state, facilitating recognition of newly synthesized TA membrane proteins. ATP hydrolysis is required for insertion. Subsequently, the homodimer reverts towards the open dimer state, lowering its affinity for the membrane-bound receptor, and returning it to the cytosol to initiate a new round of targeting.</text>
</comment>
<comment type="subunit">
    <text evidence="1">Homodimer.</text>
</comment>
<comment type="subcellular location">
    <subcellularLocation>
        <location evidence="1">Cytoplasm</location>
    </subcellularLocation>
    <subcellularLocation>
        <location evidence="1">Endoplasmic reticulum</location>
    </subcellularLocation>
</comment>
<comment type="similarity">
    <text evidence="1">Belongs to the arsA ATPase family.</text>
</comment>